<keyword id="KW-0963">Cytoplasm</keyword>
<keyword id="KW-0378">Hydrolase</keyword>
<keyword id="KW-0540">Nuclease</keyword>
<keyword id="KW-0690">Ribosome biogenesis</keyword>
<sequence>MAAAGSIMAFDFGTRSIGVAIGQRVTCTARPLTAFKARDGVPDWQQIEKLLKEWRPETVVVGLPLNMDGSEQPLTARVRKFANRMHGRFGVQVVLHDERLSTVEARAGLFERGGYRALEKGKVDAGSAVIILESWLEQFPE</sequence>
<dbReference type="EC" id="3.1.-.-" evidence="1"/>
<dbReference type="EMBL" id="AP008232">
    <property type="protein sequence ID" value="BAE75299.1"/>
    <property type="molecule type" value="Genomic_DNA"/>
</dbReference>
<dbReference type="RefSeq" id="WP_011411754.1">
    <property type="nucleotide sequence ID" value="NC_007712.1"/>
</dbReference>
<dbReference type="SMR" id="Q2NRC6"/>
<dbReference type="STRING" id="343509.SG2024"/>
<dbReference type="KEGG" id="sgl:SG2024"/>
<dbReference type="eggNOG" id="COG0816">
    <property type="taxonomic scope" value="Bacteria"/>
</dbReference>
<dbReference type="HOGENOM" id="CLU_098240_3_0_6"/>
<dbReference type="OrthoDB" id="9796140at2"/>
<dbReference type="Proteomes" id="UP000001932">
    <property type="component" value="Chromosome"/>
</dbReference>
<dbReference type="GO" id="GO:0005829">
    <property type="term" value="C:cytosol"/>
    <property type="evidence" value="ECO:0007669"/>
    <property type="project" value="TreeGrafter"/>
</dbReference>
<dbReference type="GO" id="GO:0004518">
    <property type="term" value="F:nuclease activity"/>
    <property type="evidence" value="ECO:0007669"/>
    <property type="project" value="UniProtKB-KW"/>
</dbReference>
<dbReference type="GO" id="GO:0000967">
    <property type="term" value="P:rRNA 5'-end processing"/>
    <property type="evidence" value="ECO:0007669"/>
    <property type="project" value="UniProtKB-UniRule"/>
</dbReference>
<dbReference type="CDD" id="cd16964">
    <property type="entry name" value="YqgF"/>
    <property type="match status" value="1"/>
</dbReference>
<dbReference type="FunFam" id="3.30.420.140:FF:000002">
    <property type="entry name" value="Putative pre-16S rRNA nuclease"/>
    <property type="match status" value="1"/>
</dbReference>
<dbReference type="Gene3D" id="3.30.420.140">
    <property type="entry name" value="YqgF/RNase H-like domain"/>
    <property type="match status" value="1"/>
</dbReference>
<dbReference type="HAMAP" id="MF_00651">
    <property type="entry name" value="Nuclease_YqgF"/>
    <property type="match status" value="1"/>
</dbReference>
<dbReference type="InterPro" id="IPR012337">
    <property type="entry name" value="RNaseH-like_sf"/>
</dbReference>
<dbReference type="InterPro" id="IPR005227">
    <property type="entry name" value="YqgF"/>
</dbReference>
<dbReference type="InterPro" id="IPR006641">
    <property type="entry name" value="YqgF/RNaseH-like_dom"/>
</dbReference>
<dbReference type="InterPro" id="IPR037027">
    <property type="entry name" value="YqgF/RNaseH-like_dom_sf"/>
</dbReference>
<dbReference type="NCBIfam" id="TIGR00250">
    <property type="entry name" value="RNAse_H_YqgF"/>
    <property type="match status" value="1"/>
</dbReference>
<dbReference type="PANTHER" id="PTHR33317">
    <property type="entry name" value="POLYNUCLEOTIDYL TRANSFERASE, RIBONUCLEASE H-LIKE SUPERFAMILY PROTEIN"/>
    <property type="match status" value="1"/>
</dbReference>
<dbReference type="PANTHER" id="PTHR33317:SF4">
    <property type="entry name" value="POLYNUCLEOTIDYL TRANSFERASE, RIBONUCLEASE H-LIKE SUPERFAMILY PROTEIN"/>
    <property type="match status" value="1"/>
</dbReference>
<dbReference type="Pfam" id="PF03652">
    <property type="entry name" value="RuvX"/>
    <property type="match status" value="1"/>
</dbReference>
<dbReference type="SMART" id="SM00732">
    <property type="entry name" value="YqgFc"/>
    <property type="match status" value="1"/>
</dbReference>
<dbReference type="SUPFAM" id="SSF53098">
    <property type="entry name" value="Ribonuclease H-like"/>
    <property type="match status" value="1"/>
</dbReference>
<name>YQGF_SODGM</name>
<gene>
    <name evidence="1" type="primary">yqgF</name>
    <name type="ordered locus">SG2024</name>
</gene>
<comment type="function">
    <text evidence="1">Could be a nuclease involved in processing of the 5'-end of pre-16S rRNA.</text>
</comment>
<comment type="subcellular location">
    <subcellularLocation>
        <location evidence="1">Cytoplasm</location>
    </subcellularLocation>
</comment>
<comment type="similarity">
    <text evidence="1">Belongs to the YqgF nuclease family.</text>
</comment>
<proteinExistence type="inferred from homology"/>
<protein>
    <recommendedName>
        <fullName evidence="1">Putative pre-16S rRNA nuclease</fullName>
        <ecNumber evidence="1">3.1.-.-</ecNumber>
    </recommendedName>
</protein>
<accession>Q2NRC6</accession>
<feature type="chain" id="PRO_0000257592" description="Putative pre-16S rRNA nuclease">
    <location>
        <begin position="1"/>
        <end position="141"/>
    </location>
</feature>
<organism>
    <name type="scientific">Sodalis glossinidius (strain morsitans)</name>
    <dbReference type="NCBI Taxonomy" id="343509"/>
    <lineage>
        <taxon>Bacteria</taxon>
        <taxon>Pseudomonadati</taxon>
        <taxon>Pseudomonadota</taxon>
        <taxon>Gammaproteobacteria</taxon>
        <taxon>Enterobacterales</taxon>
        <taxon>Bruguierivoracaceae</taxon>
        <taxon>Sodalis</taxon>
    </lineage>
</organism>
<evidence type="ECO:0000255" key="1">
    <source>
        <dbReference type="HAMAP-Rule" id="MF_00651"/>
    </source>
</evidence>
<reference key="1">
    <citation type="journal article" date="2006" name="Genome Res.">
        <title>Massive genome erosion and functional adaptations provide insights into the symbiotic lifestyle of Sodalis glossinidius in the tsetse host.</title>
        <authorList>
            <person name="Toh H."/>
            <person name="Weiss B.L."/>
            <person name="Perkin S.A.H."/>
            <person name="Yamashita A."/>
            <person name="Oshima K."/>
            <person name="Hattori M."/>
            <person name="Aksoy S."/>
        </authorList>
    </citation>
    <scope>NUCLEOTIDE SEQUENCE [LARGE SCALE GENOMIC DNA]</scope>
    <source>
        <strain>morsitans</strain>
    </source>
</reference>